<protein>
    <recommendedName>
        <fullName>Transcriptional repressor protein KorC</fullName>
    </recommendedName>
</protein>
<proteinExistence type="predicted"/>
<feature type="chain" id="PRO_0000068382" description="Transcriptional repressor protein KorC">
    <location>
        <begin position="1"/>
        <end position="85"/>
    </location>
</feature>
<feature type="DNA-binding region" description="H-T-H motif" evidence="1">
    <location>
        <begin position="28"/>
        <end position="47"/>
    </location>
</feature>
<comment type="function">
    <text>Acts with KorA as corepressor in the control of the kilC and kilE operons.</text>
</comment>
<sequence length="85" mass="9150">MSDVNIRLECLRPAERWVQPTGAEIREVLHLAGLTGGQAARILGLGAKGDRTVRRWVGEDSPIPYAAWAILCDLAGIGAIWKGQG</sequence>
<dbReference type="EMBL" id="M32794">
    <property type="protein sequence ID" value="AAA26409.1"/>
    <property type="molecule type" value="Genomic_DNA"/>
</dbReference>
<dbReference type="EMBL" id="L18919">
    <property type="protein sequence ID" value="AAA92764.1"/>
    <property type="molecule type" value="Genomic_DNA"/>
</dbReference>
<dbReference type="RefSeq" id="WP_011205775.1">
    <property type="nucleotide sequence ID" value="NZ_VMTS01000048.1"/>
</dbReference>
<dbReference type="SMR" id="Q52331"/>
<dbReference type="GO" id="GO:0003677">
    <property type="term" value="F:DNA binding"/>
    <property type="evidence" value="ECO:0007669"/>
    <property type="project" value="UniProtKB-KW"/>
</dbReference>
<keyword id="KW-0238">DNA-binding</keyword>
<keyword id="KW-0614">Plasmid</keyword>
<keyword id="KW-0678">Repressor</keyword>
<keyword id="KW-0804">Transcription</keyword>
<keyword id="KW-0805">Transcription regulation</keyword>
<reference key="1">
    <citation type="journal article" date="1990" name="J. Bacteriol.">
        <title>The kil-kor regulon of broad-host-range plasmid RK2: nucleotide sequence, polypeptide product, and expression of regulatory gene korC.</title>
        <authorList>
            <person name="Kornacki J.A."/>
            <person name="Burlage R.S."/>
            <person name="Figurski D.H."/>
        </authorList>
    </citation>
    <scope>NUCLEOTIDE SEQUENCE [GENOMIC DNA]</scope>
</reference>
<reference key="2">
    <citation type="journal article" date="1993" name="J. Bacteriol.">
        <title>kil-kor regulon of promiscuous plasmid RK2: structure, products, and regulation of two operons that constitute the kilE locus.</title>
        <authorList>
            <person name="Kornacki J.A."/>
            <person name="Chang C.-H."/>
            <person name="Figurski D.H."/>
        </authorList>
    </citation>
    <scope>NUCLEOTIDE SEQUENCE [GENOMIC DNA] OF 79-85</scope>
</reference>
<geneLocation type="plasmid">
    <name>IncP-alpha RK2</name>
</geneLocation>
<accession>Q52331</accession>
<accession>Q52769</accession>
<gene>
    <name type="primary">korC</name>
</gene>
<evidence type="ECO:0000255" key="1"/>
<name>KORC2_ECOLX</name>
<organism>
    <name type="scientific">Escherichia coli</name>
    <dbReference type="NCBI Taxonomy" id="562"/>
    <lineage>
        <taxon>Bacteria</taxon>
        <taxon>Pseudomonadati</taxon>
        <taxon>Pseudomonadota</taxon>
        <taxon>Gammaproteobacteria</taxon>
        <taxon>Enterobacterales</taxon>
        <taxon>Enterobacteriaceae</taxon>
        <taxon>Escherichia</taxon>
    </lineage>
</organism>